<gene>
    <name evidence="2" type="primary">tuf1</name>
    <name type="ordered locus">BMASAVP1_A3171</name>
</gene>
<gene>
    <name evidence="2" type="primary">tuf2</name>
    <name type="ordered locus">BMASAVP1_A3186</name>
</gene>
<evidence type="ECO:0000250" key="1"/>
<evidence type="ECO:0000255" key="2">
    <source>
        <dbReference type="HAMAP-Rule" id="MF_00118"/>
    </source>
</evidence>
<comment type="function">
    <text evidence="2">GTP hydrolase that promotes the GTP-dependent binding of aminoacyl-tRNA to the A-site of ribosomes during protein biosynthesis.</text>
</comment>
<comment type="catalytic activity">
    <reaction evidence="2">
        <text>GTP + H2O = GDP + phosphate + H(+)</text>
        <dbReference type="Rhea" id="RHEA:19669"/>
        <dbReference type="ChEBI" id="CHEBI:15377"/>
        <dbReference type="ChEBI" id="CHEBI:15378"/>
        <dbReference type="ChEBI" id="CHEBI:37565"/>
        <dbReference type="ChEBI" id="CHEBI:43474"/>
        <dbReference type="ChEBI" id="CHEBI:58189"/>
        <dbReference type="EC" id="3.6.5.3"/>
    </reaction>
    <physiologicalReaction direction="left-to-right" evidence="2">
        <dbReference type="Rhea" id="RHEA:19670"/>
    </physiologicalReaction>
</comment>
<comment type="subunit">
    <text evidence="2">Monomer.</text>
</comment>
<comment type="subcellular location">
    <subcellularLocation>
        <location evidence="2">Cytoplasm</location>
    </subcellularLocation>
</comment>
<comment type="similarity">
    <text evidence="2">Belongs to the TRAFAC class translation factor GTPase superfamily. Classic translation factor GTPase family. EF-Tu/EF-1A subfamily.</text>
</comment>
<dbReference type="EC" id="3.6.5.3" evidence="2"/>
<dbReference type="EMBL" id="CP000526">
    <property type="protein sequence ID" value="ABM51519.1"/>
    <property type="molecule type" value="Genomic_DNA"/>
</dbReference>
<dbReference type="EMBL" id="CP000526">
    <property type="protein sequence ID" value="ABM52219.1"/>
    <property type="molecule type" value="Genomic_DNA"/>
</dbReference>
<dbReference type="SMR" id="A1V8A5"/>
<dbReference type="KEGG" id="bmv:BMASAVP1_A3171"/>
<dbReference type="KEGG" id="bmv:BMASAVP1_A3186"/>
<dbReference type="HOGENOM" id="CLU_007265_0_0_4"/>
<dbReference type="GO" id="GO:0005737">
    <property type="term" value="C:cytoplasm"/>
    <property type="evidence" value="ECO:0007669"/>
    <property type="project" value="UniProtKB-SubCell"/>
</dbReference>
<dbReference type="GO" id="GO:0005525">
    <property type="term" value="F:GTP binding"/>
    <property type="evidence" value="ECO:0007669"/>
    <property type="project" value="UniProtKB-UniRule"/>
</dbReference>
<dbReference type="GO" id="GO:0003924">
    <property type="term" value="F:GTPase activity"/>
    <property type="evidence" value="ECO:0007669"/>
    <property type="project" value="InterPro"/>
</dbReference>
<dbReference type="GO" id="GO:0097216">
    <property type="term" value="F:guanosine tetraphosphate binding"/>
    <property type="evidence" value="ECO:0007669"/>
    <property type="project" value="UniProtKB-ARBA"/>
</dbReference>
<dbReference type="GO" id="GO:0003746">
    <property type="term" value="F:translation elongation factor activity"/>
    <property type="evidence" value="ECO:0007669"/>
    <property type="project" value="UniProtKB-UniRule"/>
</dbReference>
<dbReference type="CDD" id="cd01884">
    <property type="entry name" value="EF_Tu"/>
    <property type="match status" value="1"/>
</dbReference>
<dbReference type="CDD" id="cd03697">
    <property type="entry name" value="EFTU_II"/>
    <property type="match status" value="1"/>
</dbReference>
<dbReference type="CDD" id="cd03707">
    <property type="entry name" value="EFTU_III"/>
    <property type="match status" value="1"/>
</dbReference>
<dbReference type="FunFam" id="2.40.30.10:FF:000001">
    <property type="entry name" value="Elongation factor Tu"/>
    <property type="match status" value="1"/>
</dbReference>
<dbReference type="FunFam" id="3.40.50.300:FF:000003">
    <property type="entry name" value="Elongation factor Tu"/>
    <property type="match status" value="1"/>
</dbReference>
<dbReference type="Gene3D" id="3.40.50.300">
    <property type="entry name" value="P-loop containing nucleotide triphosphate hydrolases"/>
    <property type="match status" value="1"/>
</dbReference>
<dbReference type="Gene3D" id="2.40.30.10">
    <property type="entry name" value="Translation factors"/>
    <property type="match status" value="2"/>
</dbReference>
<dbReference type="HAMAP" id="MF_00118_B">
    <property type="entry name" value="EF_Tu_B"/>
    <property type="match status" value="1"/>
</dbReference>
<dbReference type="InterPro" id="IPR041709">
    <property type="entry name" value="EF-Tu_GTP-bd"/>
</dbReference>
<dbReference type="InterPro" id="IPR050055">
    <property type="entry name" value="EF-Tu_GTPase"/>
</dbReference>
<dbReference type="InterPro" id="IPR004161">
    <property type="entry name" value="EFTu-like_2"/>
</dbReference>
<dbReference type="InterPro" id="IPR033720">
    <property type="entry name" value="EFTU_2"/>
</dbReference>
<dbReference type="InterPro" id="IPR031157">
    <property type="entry name" value="G_TR_CS"/>
</dbReference>
<dbReference type="InterPro" id="IPR027417">
    <property type="entry name" value="P-loop_NTPase"/>
</dbReference>
<dbReference type="InterPro" id="IPR005225">
    <property type="entry name" value="Small_GTP-bd"/>
</dbReference>
<dbReference type="InterPro" id="IPR000795">
    <property type="entry name" value="T_Tr_GTP-bd_dom"/>
</dbReference>
<dbReference type="InterPro" id="IPR009000">
    <property type="entry name" value="Transl_B-barrel_sf"/>
</dbReference>
<dbReference type="InterPro" id="IPR009001">
    <property type="entry name" value="Transl_elong_EF1A/Init_IF2_C"/>
</dbReference>
<dbReference type="InterPro" id="IPR004541">
    <property type="entry name" value="Transl_elong_EFTu/EF1A_bac/org"/>
</dbReference>
<dbReference type="InterPro" id="IPR004160">
    <property type="entry name" value="Transl_elong_EFTu/EF1A_C"/>
</dbReference>
<dbReference type="NCBIfam" id="TIGR00485">
    <property type="entry name" value="EF-Tu"/>
    <property type="match status" value="1"/>
</dbReference>
<dbReference type="NCBIfam" id="NF000766">
    <property type="entry name" value="PRK00049.1"/>
    <property type="match status" value="1"/>
</dbReference>
<dbReference type="NCBIfam" id="NF009372">
    <property type="entry name" value="PRK12735.1"/>
    <property type="match status" value="1"/>
</dbReference>
<dbReference type="NCBIfam" id="NF009373">
    <property type="entry name" value="PRK12736.1"/>
    <property type="match status" value="1"/>
</dbReference>
<dbReference type="NCBIfam" id="TIGR00231">
    <property type="entry name" value="small_GTP"/>
    <property type="match status" value="1"/>
</dbReference>
<dbReference type="PANTHER" id="PTHR43721:SF22">
    <property type="entry name" value="ELONGATION FACTOR TU, MITOCHONDRIAL"/>
    <property type="match status" value="1"/>
</dbReference>
<dbReference type="PANTHER" id="PTHR43721">
    <property type="entry name" value="ELONGATION FACTOR TU-RELATED"/>
    <property type="match status" value="1"/>
</dbReference>
<dbReference type="Pfam" id="PF00009">
    <property type="entry name" value="GTP_EFTU"/>
    <property type="match status" value="1"/>
</dbReference>
<dbReference type="Pfam" id="PF03144">
    <property type="entry name" value="GTP_EFTU_D2"/>
    <property type="match status" value="1"/>
</dbReference>
<dbReference type="Pfam" id="PF03143">
    <property type="entry name" value="GTP_EFTU_D3"/>
    <property type="match status" value="1"/>
</dbReference>
<dbReference type="PRINTS" id="PR00315">
    <property type="entry name" value="ELONGATNFCT"/>
</dbReference>
<dbReference type="SUPFAM" id="SSF50465">
    <property type="entry name" value="EF-Tu/eEF-1alpha/eIF2-gamma C-terminal domain"/>
    <property type="match status" value="1"/>
</dbReference>
<dbReference type="SUPFAM" id="SSF52540">
    <property type="entry name" value="P-loop containing nucleoside triphosphate hydrolases"/>
    <property type="match status" value="1"/>
</dbReference>
<dbReference type="SUPFAM" id="SSF50447">
    <property type="entry name" value="Translation proteins"/>
    <property type="match status" value="1"/>
</dbReference>
<dbReference type="PROSITE" id="PS00301">
    <property type="entry name" value="G_TR_1"/>
    <property type="match status" value="1"/>
</dbReference>
<dbReference type="PROSITE" id="PS51722">
    <property type="entry name" value="G_TR_2"/>
    <property type="match status" value="1"/>
</dbReference>
<protein>
    <recommendedName>
        <fullName evidence="2">Elongation factor Tu</fullName>
        <shortName evidence="2">EF-Tu</shortName>
        <ecNumber evidence="2">3.6.5.3</ecNumber>
    </recommendedName>
</protein>
<proteinExistence type="inferred from homology"/>
<accession>A1V8A5</accession>
<organism>
    <name type="scientific">Burkholderia mallei (strain SAVP1)</name>
    <dbReference type="NCBI Taxonomy" id="320388"/>
    <lineage>
        <taxon>Bacteria</taxon>
        <taxon>Pseudomonadati</taxon>
        <taxon>Pseudomonadota</taxon>
        <taxon>Betaproteobacteria</taxon>
        <taxon>Burkholderiales</taxon>
        <taxon>Burkholderiaceae</taxon>
        <taxon>Burkholderia</taxon>
        <taxon>pseudomallei group</taxon>
    </lineage>
</organism>
<reference key="1">
    <citation type="journal article" date="2010" name="Genome Biol. Evol.">
        <title>Continuing evolution of Burkholderia mallei through genome reduction and large-scale rearrangements.</title>
        <authorList>
            <person name="Losada L."/>
            <person name="Ronning C.M."/>
            <person name="DeShazer D."/>
            <person name="Woods D."/>
            <person name="Fedorova N."/>
            <person name="Kim H.S."/>
            <person name="Shabalina S.A."/>
            <person name="Pearson T.R."/>
            <person name="Brinkac L."/>
            <person name="Tan P."/>
            <person name="Nandi T."/>
            <person name="Crabtree J."/>
            <person name="Badger J."/>
            <person name="Beckstrom-Sternberg S."/>
            <person name="Saqib M."/>
            <person name="Schutzer S.E."/>
            <person name="Keim P."/>
            <person name="Nierman W.C."/>
        </authorList>
    </citation>
    <scope>NUCLEOTIDE SEQUENCE [LARGE SCALE GENOMIC DNA]</scope>
    <source>
        <strain>SAVP1</strain>
    </source>
</reference>
<keyword id="KW-0963">Cytoplasm</keyword>
<keyword id="KW-0251">Elongation factor</keyword>
<keyword id="KW-0342">GTP-binding</keyword>
<keyword id="KW-0378">Hydrolase</keyword>
<keyword id="KW-0460">Magnesium</keyword>
<keyword id="KW-0479">Metal-binding</keyword>
<keyword id="KW-0547">Nucleotide-binding</keyword>
<keyword id="KW-0648">Protein biosynthesis</keyword>
<feature type="chain" id="PRO_0000337340" description="Elongation factor Tu">
    <location>
        <begin position="1"/>
        <end position="396"/>
    </location>
</feature>
<feature type="domain" description="tr-type G">
    <location>
        <begin position="10"/>
        <end position="206"/>
    </location>
</feature>
<feature type="region of interest" description="G1" evidence="1">
    <location>
        <begin position="19"/>
        <end position="26"/>
    </location>
</feature>
<feature type="region of interest" description="G2" evidence="1">
    <location>
        <begin position="60"/>
        <end position="64"/>
    </location>
</feature>
<feature type="region of interest" description="G3" evidence="1">
    <location>
        <begin position="81"/>
        <end position="84"/>
    </location>
</feature>
<feature type="region of interest" description="G4" evidence="1">
    <location>
        <begin position="136"/>
        <end position="139"/>
    </location>
</feature>
<feature type="region of interest" description="G5" evidence="1">
    <location>
        <begin position="174"/>
        <end position="176"/>
    </location>
</feature>
<feature type="binding site" evidence="2">
    <location>
        <begin position="19"/>
        <end position="26"/>
    </location>
    <ligand>
        <name>GTP</name>
        <dbReference type="ChEBI" id="CHEBI:37565"/>
    </ligand>
</feature>
<feature type="binding site" evidence="2">
    <location>
        <position position="26"/>
    </location>
    <ligand>
        <name>Mg(2+)</name>
        <dbReference type="ChEBI" id="CHEBI:18420"/>
    </ligand>
</feature>
<feature type="binding site" evidence="2">
    <location>
        <begin position="81"/>
        <end position="85"/>
    </location>
    <ligand>
        <name>GTP</name>
        <dbReference type="ChEBI" id="CHEBI:37565"/>
    </ligand>
</feature>
<feature type="binding site" evidence="2">
    <location>
        <begin position="136"/>
        <end position="139"/>
    </location>
    <ligand>
        <name>GTP</name>
        <dbReference type="ChEBI" id="CHEBI:37565"/>
    </ligand>
</feature>
<name>EFTU_BURMS</name>
<sequence length="396" mass="42991">MAKEKFERTKPHVNVGTIGHVDHGKTTLTAAIATVLSAKFGGEAKKYDEIDAAPEEKARGITINTAHIEYETANRHYAHVDCPGHADYVKNMITGAAQMDGAILVCSAADGPMPQTREHILLARQVGVPYIIVFLNKCDMVDDAELLELVEMEVRELLSKYDFPGDDTPIIKGSAKLALEGDKGELGEVAIMNLADALDTYIPTPERAVDGAFLMPVEDVFSISGRGTVVTGRVERGVIKVGEEIEIVGIKATAKTTCTGVEMFRKLLDQGQAGDNVGILLRGTKREDVERGQVLAKPGSITPHTHFTAEVYVLSKDEGGRHTPFFNNYRPQFYFRTTDVTGSIELPKDKEMVMPGDNVSITVKLIAPIAMEEGLRFAIREGGRTVGAGVVAKIIE</sequence>